<reference key="1">
    <citation type="journal article" date="2007" name="Science">
        <title>The Chlamydomonas genome reveals the evolution of key animal and plant functions.</title>
        <authorList>
            <person name="Merchant S.S."/>
            <person name="Prochnik S.E."/>
            <person name="Vallon O."/>
            <person name="Harris E.H."/>
            <person name="Karpowicz S.J."/>
            <person name="Witman G.B."/>
            <person name="Terry A."/>
            <person name="Salamov A."/>
            <person name="Fritz-Laylin L.K."/>
            <person name="Marechal-Drouard L."/>
            <person name="Marshall W.F."/>
            <person name="Qu L.H."/>
            <person name="Nelson D.R."/>
            <person name="Sanderfoot A.A."/>
            <person name="Spalding M.H."/>
            <person name="Kapitonov V.V."/>
            <person name="Ren Q."/>
            <person name="Ferris P."/>
            <person name="Lindquist E."/>
            <person name="Shapiro H."/>
            <person name="Lucas S.M."/>
            <person name="Grimwood J."/>
            <person name="Schmutz J."/>
            <person name="Cardol P."/>
            <person name="Cerutti H."/>
            <person name="Chanfreau G."/>
            <person name="Chen C.L."/>
            <person name="Cognat V."/>
            <person name="Croft M.T."/>
            <person name="Dent R."/>
            <person name="Dutcher S."/>
            <person name="Fernandez E."/>
            <person name="Fukuzawa H."/>
            <person name="Gonzalez-Ballester D."/>
            <person name="Gonzalez-Halphen D."/>
            <person name="Hallmann A."/>
            <person name="Hanikenne M."/>
            <person name="Hippler M."/>
            <person name="Inwood W."/>
            <person name="Jabbari K."/>
            <person name="Kalanon M."/>
            <person name="Kuras R."/>
            <person name="Lefebvre P.A."/>
            <person name="Lemaire S.D."/>
            <person name="Lobanov A.V."/>
            <person name="Lohr M."/>
            <person name="Manuell A."/>
            <person name="Meier I."/>
            <person name="Mets L."/>
            <person name="Mittag M."/>
            <person name="Mittelmeier T."/>
            <person name="Moroney J.V."/>
            <person name="Moseley J."/>
            <person name="Napoli C."/>
            <person name="Nedelcu A.M."/>
            <person name="Niyogi K."/>
            <person name="Novoselov S.V."/>
            <person name="Paulsen I.T."/>
            <person name="Pazour G.J."/>
            <person name="Purton S."/>
            <person name="Ral J.P."/>
            <person name="Riano-Pachon D.M."/>
            <person name="Riekhof W."/>
            <person name="Rymarquis L."/>
            <person name="Schroda M."/>
            <person name="Stern D."/>
            <person name="Umen J."/>
            <person name="Willows R."/>
            <person name="Wilson N."/>
            <person name="Zimmer S.L."/>
            <person name="Allmer J."/>
            <person name="Balk J."/>
            <person name="Bisova K."/>
            <person name="Chen C.J."/>
            <person name="Elias M."/>
            <person name="Gendler K."/>
            <person name="Hauser C."/>
            <person name="Lamb M.R."/>
            <person name="Ledford H."/>
            <person name="Long J.C."/>
            <person name="Minagawa J."/>
            <person name="Page M.D."/>
            <person name="Pan J."/>
            <person name="Pootakham W."/>
            <person name="Roje S."/>
            <person name="Rose A."/>
            <person name="Stahlberg E."/>
            <person name="Terauchi A.M."/>
            <person name="Yang P."/>
            <person name="Ball S."/>
            <person name="Bowler C."/>
            <person name="Dieckmann C.L."/>
            <person name="Gladyshev V.N."/>
            <person name="Green P."/>
            <person name="Jorgensen R."/>
            <person name="Mayfield S."/>
            <person name="Mueller-Roeber B."/>
            <person name="Rajamani S."/>
            <person name="Sayre R.T."/>
            <person name="Brokstein P."/>
            <person name="Dubchak I."/>
            <person name="Goodstein D."/>
            <person name="Hornick L."/>
            <person name="Huang Y.W."/>
            <person name="Jhaveri J."/>
            <person name="Luo Y."/>
            <person name="Martinez D."/>
            <person name="Ngau W.C."/>
            <person name="Otillar B."/>
            <person name="Poliakov A."/>
            <person name="Porter A."/>
            <person name="Szajkowski L."/>
            <person name="Werner G."/>
            <person name="Zhou K."/>
            <person name="Grigoriev I.V."/>
            <person name="Rokhsar D.S."/>
            <person name="Grossman A.R."/>
        </authorList>
    </citation>
    <scope>NUCLEOTIDE SEQUENCE [LARGE SCALE GENOMIC DNA]</scope>
    <source>
        <strain>CC-503</strain>
        <strain>cw92</strain>
    </source>
</reference>
<evidence type="ECO:0000255" key="1">
    <source>
        <dbReference type="HAMAP-Rule" id="MF_03135"/>
    </source>
</evidence>
<protein>
    <recommendedName>
        <fullName evidence="1">Elongation factor Ts, mitochondrial</fullName>
        <shortName evidence="1">EF-Ts</shortName>
        <shortName evidence="1">EF-TsMt</shortName>
    </recommendedName>
</protein>
<accession>A8IGK2</accession>
<organism>
    <name type="scientific">Chlamydomonas reinhardtii</name>
    <name type="common">Chlamydomonas smithii</name>
    <dbReference type="NCBI Taxonomy" id="3055"/>
    <lineage>
        <taxon>Eukaryota</taxon>
        <taxon>Viridiplantae</taxon>
        <taxon>Chlorophyta</taxon>
        <taxon>core chlorophytes</taxon>
        <taxon>Chlorophyceae</taxon>
        <taxon>CS clade</taxon>
        <taxon>Chlamydomonadales</taxon>
        <taxon>Chlamydomonadaceae</taxon>
        <taxon>Chlamydomonas</taxon>
    </lineage>
</organism>
<dbReference type="EMBL" id="DS496117">
    <property type="protein sequence ID" value="EDP05669.1"/>
    <property type="molecule type" value="Genomic_DNA"/>
</dbReference>
<dbReference type="RefSeq" id="XP_001690410.1">
    <property type="nucleotide sequence ID" value="XM_001690358.1"/>
</dbReference>
<dbReference type="SMR" id="A8IGK2"/>
<dbReference type="PaxDb" id="3055-EDP05669"/>
<dbReference type="eggNOG" id="KOG1071">
    <property type="taxonomic scope" value="Eukaryota"/>
</dbReference>
<dbReference type="HOGENOM" id="CLU_047155_2_0_1"/>
<dbReference type="GO" id="GO:0005739">
    <property type="term" value="C:mitochondrion"/>
    <property type="evidence" value="ECO:0007669"/>
    <property type="project" value="UniProtKB-SubCell"/>
</dbReference>
<dbReference type="GO" id="GO:0003746">
    <property type="term" value="F:translation elongation factor activity"/>
    <property type="evidence" value="ECO:0007669"/>
    <property type="project" value="UniProtKB-UniRule"/>
</dbReference>
<dbReference type="CDD" id="cd14275">
    <property type="entry name" value="UBA_EF-Ts"/>
    <property type="match status" value="1"/>
</dbReference>
<dbReference type="FunFam" id="1.10.8.10:FF:000001">
    <property type="entry name" value="Elongation factor Ts"/>
    <property type="match status" value="1"/>
</dbReference>
<dbReference type="Gene3D" id="1.10.8.10">
    <property type="entry name" value="DNA helicase RuvA subunit, C-terminal domain"/>
    <property type="match status" value="1"/>
</dbReference>
<dbReference type="Gene3D" id="3.30.479.20">
    <property type="entry name" value="Elongation factor Ts, dimerisation domain"/>
    <property type="match status" value="2"/>
</dbReference>
<dbReference type="HAMAP" id="MF_00050">
    <property type="entry name" value="EF_Ts"/>
    <property type="match status" value="1"/>
</dbReference>
<dbReference type="InterPro" id="IPR036402">
    <property type="entry name" value="EF-Ts_dimer_sf"/>
</dbReference>
<dbReference type="InterPro" id="IPR001816">
    <property type="entry name" value="Transl_elong_EFTs/EF1B"/>
</dbReference>
<dbReference type="InterPro" id="IPR014039">
    <property type="entry name" value="Transl_elong_EFTs/EF1B_dimer"/>
</dbReference>
<dbReference type="InterPro" id="IPR018101">
    <property type="entry name" value="Transl_elong_Ts_CS"/>
</dbReference>
<dbReference type="InterPro" id="IPR009060">
    <property type="entry name" value="UBA-like_sf"/>
</dbReference>
<dbReference type="PANTHER" id="PTHR11741">
    <property type="entry name" value="ELONGATION FACTOR TS"/>
    <property type="match status" value="1"/>
</dbReference>
<dbReference type="PANTHER" id="PTHR11741:SF0">
    <property type="entry name" value="ELONGATION FACTOR TS, MITOCHONDRIAL"/>
    <property type="match status" value="1"/>
</dbReference>
<dbReference type="Pfam" id="PF00889">
    <property type="entry name" value="EF_TS"/>
    <property type="match status" value="2"/>
</dbReference>
<dbReference type="SUPFAM" id="SSF54713">
    <property type="entry name" value="Elongation factor Ts (EF-Ts), dimerisation domain"/>
    <property type="match status" value="1"/>
</dbReference>
<dbReference type="SUPFAM" id="SSF46934">
    <property type="entry name" value="UBA-like"/>
    <property type="match status" value="1"/>
</dbReference>
<dbReference type="PROSITE" id="PS01127">
    <property type="entry name" value="EF_TS_2"/>
    <property type="match status" value="1"/>
</dbReference>
<name>EFTS_CHLRE</name>
<comment type="function">
    <text evidence="1">Associates with the EF-Tu.GDP complex and induces the exchange of GDP to GTP. It remains bound to the aminoacyl-tRNA.EF-Tu.GTP complex up to the GTP hydrolysis stage on the ribosome.</text>
</comment>
<comment type="subcellular location">
    <subcellularLocation>
        <location evidence="1">Mitochondrion</location>
    </subcellularLocation>
</comment>
<comment type="miscellaneous">
    <text evidence="1">This protein may be expected to contain an N-terminal transit peptide but none has been predicted.</text>
</comment>
<comment type="similarity">
    <text evidence="1">Belongs to the EF-Ts family.</text>
</comment>
<keyword id="KW-0251">Elongation factor</keyword>
<keyword id="KW-0496">Mitochondrion</keyword>
<keyword id="KW-0648">Protein biosynthesis</keyword>
<proteinExistence type="inferred from homology"/>
<gene>
    <name evidence="1" type="primary">EFTS</name>
    <name type="synonym">EFT2</name>
    <name type="ORF">CHLREDRAFT_169416</name>
</gene>
<feature type="chain" id="PRO_0000402325" description="Elongation factor Ts, mitochondrial">
    <location>
        <begin position="1"/>
        <end position="322"/>
    </location>
</feature>
<sequence length="322" mass="33177">MSGIPRSLLGQCAVALLGANARSGLTLHHAFAAYSSAAAPAQSAALIKQLRERSGAPIADVKSMLVEHGWDMDKAYEALRKKGLAAAAKKASRHAAEGLVGASFAASAASSGGSSSSEASTSGGGRGSVVVVELNSETDFVARNELFQKLLREVMGAAHALGPAAALMSARTASGPSVSEAVTALAVQVRENVRLRRAFRVDSGAGGLVFPYVHQAAAPGLGKLASVVVLAPEPDDKAQPLVLDKVVEGRLGKLLSDWCLEAQRYVLEDELTVDKLMARLKKEVGQPVRVASFLRVQCGEGLGAKAGGGDFAAEVARIVSEA</sequence>